<proteinExistence type="inferred from homology"/>
<protein>
    <recommendedName>
        <fullName evidence="1">Ribosomal protein L11 methyltransferase</fullName>
        <shortName evidence="1">L11 Mtase</shortName>
        <ecNumber evidence="1">2.1.1.-</ecNumber>
    </recommendedName>
</protein>
<gene>
    <name evidence="1" type="primary">prmA</name>
    <name type="ordered locus">P9515_15141</name>
</gene>
<organism>
    <name type="scientific">Prochlorococcus marinus (strain MIT 9515)</name>
    <dbReference type="NCBI Taxonomy" id="167542"/>
    <lineage>
        <taxon>Bacteria</taxon>
        <taxon>Bacillati</taxon>
        <taxon>Cyanobacteriota</taxon>
        <taxon>Cyanophyceae</taxon>
        <taxon>Synechococcales</taxon>
        <taxon>Prochlorococcaceae</taxon>
        <taxon>Prochlorococcus</taxon>
    </lineage>
</organism>
<sequence>MEINYWYKLTFEIEANLEEIIIWKLNELGISSYALEILLNNKNNKKVLIWLPNLNWPKSLRIKLERNIKEVLDKNNYRTNCFEWIVIEQEDWMSSWKKYWGPELVGKKLLVLPCWLELPEKFKNKKVIKIDPGAAFGTGSHPTTSLCLEELEKFSLSNKKILDIGSGSGILSIAARYFGASKVYSIDNDYLAINSTESNFRLNFGDLDDLKTYLGRFDELVSKYSLKNFDLILCNILAEVIKGIIPDIRNCLKINGEVIFSGILNSQKDEIIKLLNASNLQINDVSSKQGWVCITAQKII</sequence>
<feature type="chain" id="PRO_1000046059" description="Ribosomal protein L11 methyltransferase">
    <location>
        <begin position="1"/>
        <end position="300"/>
    </location>
</feature>
<feature type="binding site" evidence="1">
    <location>
        <position position="144"/>
    </location>
    <ligand>
        <name>S-adenosyl-L-methionine</name>
        <dbReference type="ChEBI" id="CHEBI:59789"/>
    </ligand>
</feature>
<feature type="binding site" evidence="1">
    <location>
        <position position="165"/>
    </location>
    <ligand>
        <name>S-adenosyl-L-methionine</name>
        <dbReference type="ChEBI" id="CHEBI:59789"/>
    </ligand>
</feature>
<feature type="binding site" evidence="1">
    <location>
        <position position="187"/>
    </location>
    <ligand>
        <name>S-adenosyl-L-methionine</name>
        <dbReference type="ChEBI" id="CHEBI:59789"/>
    </ligand>
</feature>
<feature type="binding site" evidence="1">
    <location>
        <position position="235"/>
    </location>
    <ligand>
        <name>S-adenosyl-L-methionine</name>
        <dbReference type="ChEBI" id="CHEBI:59789"/>
    </ligand>
</feature>
<comment type="function">
    <text evidence="1">Methylates ribosomal protein L11.</text>
</comment>
<comment type="catalytic activity">
    <reaction evidence="1">
        <text>L-lysyl-[protein] + 3 S-adenosyl-L-methionine = N(6),N(6),N(6)-trimethyl-L-lysyl-[protein] + 3 S-adenosyl-L-homocysteine + 3 H(+)</text>
        <dbReference type="Rhea" id="RHEA:54192"/>
        <dbReference type="Rhea" id="RHEA-COMP:9752"/>
        <dbReference type="Rhea" id="RHEA-COMP:13826"/>
        <dbReference type="ChEBI" id="CHEBI:15378"/>
        <dbReference type="ChEBI" id="CHEBI:29969"/>
        <dbReference type="ChEBI" id="CHEBI:57856"/>
        <dbReference type="ChEBI" id="CHEBI:59789"/>
        <dbReference type="ChEBI" id="CHEBI:61961"/>
    </reaction>
</comment>
<comment type="subcellular location">
    <subcellularLocation>
        <location evidence="1">Cytoplasm</location>
    </subcellularLocation>
</comment>
<comment type="similarity">
    <text evidence="1">Belongs to the methyltransferase superfamily. PrmA family.</text>
</comment>
<reference key="1">
    <citation type="journal article" date="2007" name="PLoS Genet.">
        <title>Patterns and implications of gene gain and loss in the evolution of Prochlorococcus.</title>
        <authorList>
            <person name="Kettler G.C."/>
            <person name="Martiny A.C."/>
            <person name="Huang K."/>
            <person name="Zucker J."/>
            <person name="Coleman M.L."/>
            <person name="Rodrigue S."/>
            <person name="Chen F."/>
            <person name="Lapidus A."/>
            <person name="Ferriera S."/>
            <person name="Johnson J."/>
            <person name="Steglich C."/>
            <person name="Church G.M."/>
            <person name="Richardson P."/>
            <person name="Chisholm S.W."/>
        </authorList>
    </citation>
    <scope>NUCLEOTIDE SEQUENCE [LARGE SCALE GENOMIC DNA]</scope>
    <source>
        <strain>MIT 9515</strain>
    </source>
</reference>
<evidence type="ECO:0000255" key="1">
    <source>
        <dbReference type="HAMAP-Rule" id="MF_00735"/>
    </source>
</evidence>
<name>PRMA_PROM5</name>
<accession>A2BY60</accession>
<keyword id="KW-0963">Cytoplasm</keyword>
<keyword id="KW-0489">Methyltransferase</keyword>
<keyword id="KW-0949">S-adenosyl-L-methionine</keyword>
<keyword id="KW-0808">Transferase</keyword>
<dbReference type="EC" id="2.1.1.-" evidence="1"/>
<dbReference type="EMBL" id="CP000552">
    <property type="protein sequence ID" value="ABM72721.1"/>
    <property type="molecule type" value="Genomic_DNA"/>
</dbReference>
<dbReference type="RefSeq" id="WP_011820817.1">
    <property type="nucleotide sequence ID" value="NC_008817.1"/>
</dbReference>
<dbReference type="SMR" id="A2BY60"/>
<dbReference type="STRING" id="167542.P9515_15141"/>
<dbReference type="GeneID" id="60201821"/>
<dbReference type="KEGG" id="pmc:P9515_15141"/>
<dbReference type="eggNOG" id="COG2264">
    <property type="taxonomic scope" value="Bacteria"/>
</dbReference>
<dbReference type="HOGENOM" id="CLU_049382_0_1_3"/>
<dbReference type="OrthoDB" id="9785995at2"/>
<dbReference type="Proteomes" id="UP000001589">
    <property type="component" value="Chromosome"/>
</dbReference>
<dbReference type="GO" id="GO:0005737">
    <property type="term" value="C:cytoplasm"/>
    <property type="evidence" value="ECO:0007669"/>
    <property type="project" value="UniProtKB-SubCell"/>
</dbReference>
<dbReference type="GO" id="GO:0016279">
    <property type="term" value="F:protein-lysine N-methyltransferase activity"/>
    <property type="evidence" value="ECO:0007669"/>
    <property type="project" value="RHEA"/>
</dbReference>
<dbReference type="GO" id="GO:0032259">
    <property type="term" value="P:methylation"/>
    <property type="evidence" value="ECO:0007669"/>
    <property type="project" value="UniProtKB-KW"/>
</dbReference>
<dbReference type="CDD" id="cd02440">
    <property type="entry name" value="AdoMet_MTases"/>
    <property type="match status" value="1"/>
</dbReference>
<dbReference type="Gene3D" id="3.40.50.150">
    <property type="entry name" value="Vaccinia Virus protein VP39"/>
    <property type="match status" value="1"/>
</dbReference>
<dbReference type="HAMAP" id="MF_00735">
    <property type="entry name" value="Methyltr_PrmA"/>
    <property type="match status" value="1"/>
</dbReference>
<dbReference type="InterPro" id="IPR050078">
    <property type="entry name" value="Ribosomal_L11_MeTrfase_PrmA"/>
</dbReference>
<dbReference type="InterPro" id="IPR004498">
    <property type="entry name" value="Ribosomal_PrmA_MeTrfase"/>
</dbReference>
<dbReference type="InterPro" id="IPR029063">
    <property type="entry name" value="SAM-dependent_MTases_sf"/>
</dbReference>
<dbReference type="NCBIfam" id="TIGR00406">
    <property type="entry name" value="prmA"/>
    <property type="match status" value="1"/>
</dbReference>
<dbReference type="PANTHER" id="PTHR43648">
    <property type="entry name" value="ELECTRON TRANSFER FLAVOPROTEIN BETA SUBUNIT LYSINE METHYLTRANSFERASE"/>
    <property type="match status" value="1"/>
</dbReference>
<dbReference type="PANTHER" id="PTHR43648:SF1">
    <property type="entry name" value="ELECTRON TRANSFER FLAVOPROTEIN BETA SUBUNIT LYSINE METHYLTRANSFERASE"/>
    <property type="match status" value="1"/>
</dbReference>
<dbReference type="Pfam" id="PF06325">
    <property type="entry name" value="PrmA"/>
    <property type="match status" value="1"/>
</dbReference>
<dbReference type="SUPFAM" id="SSF53335">
    <property type="entry name" value="S-adenosyl-L-methionine-dependent methyltransferases"/>
    <property type="match status" value="1"/>
</dbReference>